<feature type="chain" id="PRO_0000101250" description="DNA polymerase I">
    <location>
        <begin position="1"/>
        <end position="921"/>
    </location>
</feature>
<feature type="domain" description="5'-3' exonuclease">
    <location>
        <begin position="1"/>
        <end position="283"/>
    </location>
</feature>
<feature type="domain" description="RPE1 insert">
    <location>
        <begin position="439"/>
        <end position="486"/>
    </location>
</feature>
<proteinExistence type="inferred from homology"/>
<dbReference type="EC" id="2.7.7.7" evidence="1"/>
<dbReference type="EMBL" id="AJ238762">
    <property type="protein sequence ID" value="CAB56073.1"/>
    <property type="molecule type" value="Genomic_DNA"/>
</dbReference>
<dbReference type="RefSeq" id="WP_010421183.1">
    <property type="nucleotide sequence ID" value="NZ_OZ018776.1"/>
</dbReference>
<dbReference type="SMR" id="Q9RLB6"/>
<dbReference type="GO" id="GO:0008409">
    <property type="term" value="F:5'-3' exonuclease activity"/>
    <property type="evidence" value="ECO:0007669"/>
    <property type="project" value="InterPro"/>
</dbReference>
<dbReference type="GO" id="GO:0003677">
    <property type="term" value="F:DNA binding"/>
    <property type="evidence" value="ECO:0007669"/>
    <property type="project" value="UniProtKB-KW"/>
</dbReference>
<dbReference type="GO" id="GO:0003887">
    <property type="term" value="F:DNA-directed DNA polymerase activity"/>
    <property type="evidence" value="ECO:0007669"/>
    <property type="project" value="UniProtKB-KW"/>
</dbReference>
<dbReference type="GO" id="GO:0006261">
    <property type="term" value="P:DNA-templated DNA replication"/>
    <property type="evidence" value="ECO:0007669"/>
    <property type="project" value="InterPro"/>
</dbReference>
<dbReference type="GO" id="GO:0006302">
    <property type="term" value="P:double-strand break repair"/>
    <property type="evidence" value="ECO:0007669"/>
    <property type="project" value="TreeGrafter"/>
</dbReference>
<dbReference type="CDD" id="cd08637">
    <property type="entry name" value="DNA_pol_A_pol_I_C"/>
    <property type="match status" value="1"/>
</dbReference>
<dbReference type="CDD" id="cd09898">
    <property type="entry name" value="H3TH_53EXO"/>
    <property type="match status" value="1"/>
</dbReference>
<dbReference type="CDD" id="cd09859">
    <property type="entry name" value="PIN_53EXO"/>
    <property type="match status" value="1"/>
</dbReference>
<dbReference type="FunFam" id="1.10.150.20:FF:000002">
    <property type="entry name" value="DNA polymerase I"/>
    <property type="match status" value="1"/>
</dbReference>
<dbReference type="FunFam" id="1.10.150.20:FF:000003">
    <property type="entry name" value="DNA polymerase I"/>
    <property type="match status" value="1"/>
</dbReference>
<dbReference type="FunFam" id="1.20.1060.10:FF:000001">
    <property type="entry name" value="DNA polymerase I"/>
    <property type="match status" value="1"/>
</dbReference>
<dbReference type="Gene3D" id="3.30.70.370">
    <property type="match status" value="1"/>
</dbReference>
<dbReference type="Gene3D" id="1.10.150.20">
    <property type="entry name" value="5' to 3' exonuclease, C-terminal subdomain"/>
    <property type="match status" value="2"/>
</dbReference>
<dbReference type="Gene3D" id="3.40.50.1010">
    <property type="entry name" value="5'-nuclease"/>
    <property type="match status" value="1"/>
</dbReference>
<dbReference type="Gene3D" id="3.30.420.10">
    <property type="entry name" value="Ribonuclease H-like superfamily/Ribonuclease H"/>
    <property type="match status" value="1"/>
</dbReference>
<dbReference type="Gene3D" id="1.20.1060.10">
    <property type="entry name" value="Taq DNA Polymerase, Chain T, domain 4"/>
    <property type="match status" value="1"/>
</dbReference>
<dbReference type="InterPro" id="IPR020046">
    <property type="entry name" value="5-3_exonucl_a-hlix_arch_N"/>
</dbReference>
<dbReference type="InterPro" id="IPR002421">
    <property type="entry name" value="5-3_exonuclease"/>
</dbReference>
<dbReference type="InterPro" id="IPR036279">
    <property type="entry name" value="5-3_exonuclease_C_sf"/>
</dbReference>
<dbReference type="InterPro" id="IPR019760">
    <property type="entry name" value="DNA-dir_DNA_pol_A_CS"/>
</dbReference>
<dbReference type="InterPro" id="IPR001098">
    <property type="entry name" value="DNA-dir_DNA_pol_A_palm_dom"/>
</dbReference>
<dbReference type="InterPro" id="IPR043502">
    <property type="entry name" value="DNA/RNA_pol_sf"/>
</dbReference>
<dbReference type="InterPro" id="IPR020045">
    <property type="entry name" value="DNA_polI_H3TH"/>
</dbReference>
<dbReference type="InterPro" id="IPR018320">
    <property type="entry name" value="DNA_polymerase_1"/>
</dbReference>
<dbReference type="InterPro" id="IPR002298">
    <property type="entry name" value="DNA_polymerase_A"/>
</dbReference>
<dbReference type="InterPro" id="IPR008918">
    <property type="entry name" value="HhH2"/>
</dbReference>
<dbReference type="InterPro" id="IPR029060">
    <property type="entry name" value="PIN-like_dom_sf"/>
</dbReference>
<dbReference type="InterPro" id="IPR012337">
    <property type="entry name" value="RNaseH-like_sf"/>
</dbReference>
<dbReference type="InterPro" id="IPR036397">
    <property type="entry name" value="RNaseH_sf"/>
</dbReference>
<dbReference type="InterPro" id="IPR005728">
    <property type="entry name" value="RPE1"/>
</dbReference>
<dbReference type="NCBIfam" id="TIGR00593">
    <property type="entry name" value="pola"/>
    <property type="match status" value="1"/>
</dbReference>
<dbReference type="NCBIfam" id="NF004397">
    <property type="entry name" value="PRK05755.1"/>
    <property type="match status" value="1"/>
</dbReference>
<dbReference type="NCBIfam" id="TIGR01045">
    <property type="entry name" value="RPE1"/>
    <property type="match status" value="1"/>
</dbReference>
<dbReference type="PANTHER" id="PTHR10133">
    <property type="entry name" value="DNA POLYMERASE I"/>
    <property type="match status" value="1"/>
</dbReference>
<dbReference type="PANTHER" id="PTHR10133:SF27">
    <property type="entry name" value="DNA POLYMERASE NU"/>
    <property type="match status" value="1"/>
</dbReference>
<dbReference type="Pfam" id="PF01367">
    <property type="entry name" value="5_3_exonuc"/>
    <property type="match status" value="1"/>
</dbReference>
<dbReference type="Pfam" id="PF02739">
    <property type="entry name" value="5_3_exonuc_N"/>
    <property type="match status" value="1"/>
</dbReference>
<dbReference type="Pfam" id="PF00476">
    <property type="entry name" value="DNA_pol_A"/>
    <property type="match status" value="1"/>
</dbReference>
<dbReference type="PRINTS" id="PR00868">
    <property type="entry name" value="DNAPOLI"/>
</dbReference>
<dbReference type="SMART" id="SM00475">
    <property type="entry name" value="53EXOc"/>
    <property type="match status" value="1"/>
</dbReference>
<dbReference type="SMART" id="SM00279">
    <property type="entry name" value="HhH2"/>
    <property type="match status" value="1"/>
</dbReference>
<dbReference type="SMART" id="SM00482">
    <property type="entry name" value="POLAc"/>
    <property type="match status" value="1"/>
</dbReference>
<dbReference type="SUPFAM" id="SSF47807">
    <property type="entry name" value="5' to 3' exonuclease, C-terminal subdomain"/>
    <property type="match status" value="1"/>
</dbReference>
<dbReference type="SUPFAM" id="SSF56672">
    <property type="entry name" value="DNA/RNA polymerases"/>
    <property type="match status" value="1"/>
</dbReference>
<dbReference type="SUPFAM" id="SSF88723">
    <property type="entry name" value="PIN domain-like"/>
    <property type="match status" value="1"/>
</dbReference>
<dbReference type="SUPFAM" id="SSF53098">
    <property type="entry name" value="Ribonuclease H-like"/>
    <property type="match status" value="1"/>
</dbReference>
<dbReference type="PROSITE" id="PS00447">
    <property type="entry name" value="DNA_POLYMERASE_A"/>
    <property type="match status" value="1"/>
</dbReference>
<keyword id="KW-0227">DNA damage</keyword>
<keyword id="KW-0234">DNA repair</keyword>
<keyword id="KW-0235">DNA replication</keyword>
<keyword id="KW-0238">DNA-binding</keyword>
<keyword id="KW-0239">DNA-directed DNA polymerase</keyword>
<keyword id="KW-0269">Exonuclease</keyword>
<keyword id="KW-0378">Hydrolase</keyword>
<keyword id="KW-0540">Nuclease</keyword>
<keyword id="KW-0548">Nucleotidyltransferase</keyword>
<keyword id="KW-0808">Transferase</keyword>
<gene>
    <name type="primary">polA</name>
</gene>
<organism>
    <name type="scientific">Rickettsia helvetica</name>
    <dbReference type="NCBI Taxonomy" id="35789"/>
    <lineage>
        <taxon>Bacteria</taxon>
        <taxon>Pseudomonadati</taxon>
        <taxon>Pseudomonadota</taxon>
        <taxon>Alphaproteobacteria</taxon>
        <taxon>Rickettsiales</taxon>
        <taxon>Rickettsiaceae</taxon>
        <taxon>Rickettsieae</taxon>
        <taxon>Rickettsia</taxon>
        <taxon>spotted fever group</taxon>
    </lineage>
</organism>
<sequence length="921" mass="104450">MTQKNTLLLIDGYGFVFRAYYAQQPLTSPKGEPVGALYGFTSMLLKLLSDFKPKHVAVVFDSGGKNFRHYIYPEYKANRPPPPEDLIVQLPLVRDVASNLNFPILEKNGYEADDIIATFATKTAALGENVVIISSDKDLLQLMSENIKIYDPLRGKYITEDDVVKKFGTTSDKLREVMALIGDRSDNIPGVPSIGPKTASSLITQFGSVENIFNSLDQVSSVKQRETLQNSREAALISWQLIGLDSNVDLDFQLNNLEWSPPNSDKLTGFLQEYGFRSLYKRAENLFDIKINDHKDIVDNKVTEIKEISNKLELENFAKDAEKIGIFGIYLLQHKGDNLAFILSLQNQSYIIKISNTSHDLFSYNAKNNNDWFSDIIFNLLADKSIKKITYSLKPLLKFYANQSHEITAIEDLELMQYALSAGLSQKNLFEEALKEDNRPLSKLAYREEFKGDTERSTAAYKSVREDASTGSTSKLPLEVEFGKRPIVINESARIVANFISLYKQNILELKDNKAFRLYSDIDLPICFILDKMEKVGIKVDANYLKQLSTEFGAEILKLEEEIFALSGTKFNIGSLKQLGEILFEKMQLPFGKASAKASSYSTGAEILEKLSEHGYNIADLLLRWRQLTKLKNTYTDSLPKQIDNITHRVHTTFLQTSTTTGRLSSQEPNLQNVPIRSSEGNKIRQAFIAEEGYKLISADYSQIELRILSHIANIDALKQAFINKDDIHTQTACQIFNLQKHELTNEHRRKAKAINFGIIYGISAFGLAKQLNVTNGEASEYIKKYFAEYKGVQEYMEQTKAFASSNGYVTNFFGRKCFVPLIHDKKLKQFAERAAINAPIQGTNADIIKIAMINLDQEIEKRKLKTRLVLQIHDELLFEAPIDEVEIIIPIIKKIMEYSTNMDVPIITEIRTGNNWMEIH</sequence>
<reference key="1">
    <citation type="journal article" date="1999" name="Mol. Biol. Evol.">
        <title>Genome degradation is an ongoing process in Rickettsia.</title>
        <authorList>
            <person name="Andersson J.O."/>
            <person name="Andersson S.G.E."/>
        </authorList>
    </citation>
    <scope>NUCLEOTIDE SEQUENCE [GENOMIC DNA]</scope>
</reference>
<reference key="2">
    <citation type="journal article" date="2000" name="Science">
        <title>Selfish DNA in protein-coding genes of Rickettsia.</title>
        <authorList>
            <person name="Ogata H."/>
            <person name="Audic S."/>
            <person name="Barbe V."/>
            <person name="Artiguenave F."/>
            <person name="Fournier P.-E."/>
            <person name="Raoult D."/>
            <person name="Claverie J.-M."/>
        </authorList>
    </citation>
    <scope>DOMAIN RPE1</scope>
</reference>
<comment type="function">
    <text evidence="1">In addition to polymerase activity, this DNA polymerase exhibits 5'-3' exonuclease activity.</text>
</comment>
<comment type="catalytic activity">
    <reaction evidence="1">
        <text>DNA(n) + a 2'-deoxyribonucleoside 5'-triphosphate = DNA(n+1) + diphosphate</text>
        <dbReference type="Rhea" id="RHEA:22508"/>
        <dbReference type="Rhea" id="RHEA-COMP:17339"/>
        <dbReference type="Rhea" id="RHEA-COMP:17340"/>
        <dbReference type="ChEBI" id="CHEBI:33019"/>
        <dbReference type="ChEBI" id="CHEBI:61560"/>
        <dbReference type="ChEBI" id="CHEBI:173112"/>
        <dbReference type="EC" id="2.7.7.7"/>
    </reaction>
</comment>
<comment type="subunit">
    <text evidence="1">Single-chain monomer with multiple functions.</text>
</comment>
<comment type="similarity">
    <text evidence="2">Belongs to the DNA polymerase type-A family.</text>
</comment>
<name>DPO1_RICHE</name>
<accession>Q9RLB6</accession>
<evidence type="ECO:0000250" key="1">
    <source>
        <dbReference type="UniProtKB" id="P52026"/>
    </source>
</evidence>
<evidence type="ECO:0000305" key="2"/>
<protein>
    <recommendedName>
        <fullName>DNA polymerase I</fullName>
        <shortName>POL I</shortName>
        <ecNumber evidence="1">2.7.7.7</ecNumber>
    </recommendedName>
</protein>